<sequence length="469" mass="51193">MTSIDINNLQNTFQQAMNMSGSPGAVCTSPTQSFMNTVPQRLNAVKHPKILKPFSTGDMKILLLENVNQTAITIFEEQGYQVEFYKSSLPEEELIEKIKDVHAIGIRSKTRLTSNVLQHAKNLVCIGCFCIGTNQVDLDYATSRGIAVFNSPFSNSRSVAELVIAEIISLARQLGDRSIELHTGTWNKVAARCWEVRGKTLGIIGYGHIGSQLSVLAEAMGLHVLYYDIVTIMALGTARQVSTLDELLNKSDFVTLHVPATPETEKMLSAPQFAAMKDGAYVINASRGTVVDIPSLIQAVKANKIAGAALDVYPHEPAKNGEGSFNDELNSWTSELVSLPNIILTPHIGGSTEEAQSSIGIEVATALSKYINEGNSVGSVNFPEVALKSLSYDQENTVRVLYIHQNVPGVLKTVNDILSNHNIEKQFSDSNGEIAYLMADISSVDQSDIKDIYEQLNQTSAKISIRLLY</sequence>
<keyword id="KW-0028">Amino-acid biosynthesis</keyword>
<keyword id="KW-0520">NAD</keyword>
<keyword id="KW-0560">Oxidoreductase</keyword>
<keyword id="KW-0597">Phosphoprotein</keyword>
<keyword id="KW-1185">Reference proteome</keyword>
<keyword id="KW-0718">Serine biosynthesis</keyword>
<organism>
    <name type="scientific">Saccharomyces cerevisiae (strain ATCC 204508 / S288c)</name>
    <name type="common">Baker's yeast</name>
    <dbReference type="NCBI Taxonomy" id="559292"/>
    <lineage>
        <taxon>Eukaryota</taxon>
        <taxon>Fungi</taxon>
        <taxon>Dikarya</taxon>
        <taxon>Ascomycota</taxon>
        <taxon>Saccharomycotina</taxon>
        <taxon>Saccharomycetes</taxon>
        <taxon>Saccharomycetales</taxon>
        <taxon>Saccharomycetaceae</taxon>
        <taxon>Saccharomyces</taxon>
    </lineage>
</organism>
<proteinExistence type="evidence at protein level"/>
<accession>P40054</accession>
<accession>D3DLY8</accession>
<name>SERA_YEAST</name>
<reference key="1">
    <citation type="journal article" date="1997" name="Nature">
        <title>The nucleotide sequence of Saccharomyces cerevisiae chromosome V.</title>
        <authorList>
            <person name="Dietrich F.S."/>
            <person name="Mulligan J.T."/>
            <person name="Hennessy K.M."/>
            <person name="Yelton M.A."/>
            <person name="Allen E."/>
            <person name="Araujo R."/>
            <person name="Aviles E."/>
            <person name="Berno A."/>
            <person name="Brennan T."/>
            <person name="Carpenter J."/>
            <person name="Chen E."/>
            <person name="Cherry J.M."/>
            <person name="Chung E."/>
            <person name="Duncan M."/>
            <person name="Guzman E."/>
            <person name="Hartzell G."/>
            <person name="Hunicke-Smith S."/>
            <person name="Hyman R.W."/>
            <person name="Kayser A."/>
            <person name="Komp C."/>
            <person name="Lashkari D."/>
            <person name="Lew H."/>
            <person name="Lin D."/>
            <person name="Mosedale D."/>
            <person name="Nakahara K."/>
            <person name="Namath A."/>
            <person name="Norgren R."/>
            <person name="Oefner P."/>
            <person name="Oh C."/>
            <person name="Petel F.X."/>
            <person name="Roberts D."/>
            <person name="Sehl P."/>
            <person name="Schramm S."/>
            <person name="Shogren T."/>
            <person name="Smith V."/>
            <person name="Taylor P."/>
            <person name="Wei Y."/>
            <person name="Botstein D."/>
            <person name="Davis R.W."/>
        </authorList>
    </citation>
    <scope>NUCLEOTIDE SEQUENCE [LARGE SCALE GENOMIC DNA]</scope>
    <source>
        <strain>ATCC 204508 / S288c</strain>
    </source>
</reference>
<reference key="2">
    <citation type="journal article" date="2014" name="G3 (Bethesda)">
        <title>The reference genome sequence of Saccharomyces cerevisiae: Then and now.</title>
        <authorList>
            <person name="Engel S.R."/>
            <person name="Dietrich F.S."/>
            <person name="Fisk D.G."/>
            <person name="Binkley G."/>
            <person name="Balakrishnan R."/>
            <person name="Costanzo M.C."/>
            <person name="Dwight S.S."/>
            <person name="Hitz B.C."/>
            <person name="Karra K."/>
            <person name="Nash R.S."/>
            <person name="Weng S."/>
            <person name="Wong E.D."/>
            <person name="Lloyd P."/>
            <person name="Skrzypek M.S."/>
            <person name="Miyasato S.R."/>
            <person name="Simison M."/>
            <person name="Cherry J.M."/>
        </authorList>
    </citation>
    <scope>GENOME REANNOTATION</scope>
    <source>
        <strain>ATCC 204508 / S288c</strain>
    </source>
</reference>
<reference key="3">
    <citation type="journal article" date="2003" name="Nature">
        <title>Global analysis of protein expression in yeast.</title>
        <authorList>
            <person name="Ghaemmaghami S."/>
            <person name="Huh W.-K."/>
            <person name="Bower K."/>
            <person name="Howson R.W."/>
            <person name="Belle A."/>
            <person name="Dephoure N."/>
            <person name="O'Shea E.K."/>
            <person name="Weissman J.S."/>
        </authorList>
    </citation>
    <scope>LEVEL OF PROTEIN EXPRESSION [LARGE SCALE ANALYSIS]</scope>
</reference>
<reference key="4">
    <citation type="journal article" date="2008" name="Mol. Cell. Proteomics">
        <title>A multidimensional chromatography technology for in-depth phosphoproteome analysis.</title>
        <authorList>
            <person name="Albuquerque C.P."/>
            <person name="Smolka M.B."/>
            <person name="Payne S.H."/>
            <person name="Bafna V."/>
            <person name="Eng J."/>
            <person name="Zhou H."/>
        </authorList>
    </citation>
    <scope>PHOSPHORYLATION [LARGE SCALE ANALYSIS] AT SER-22</scope>
    <scope>IDENTIFICATION BY MASS SPECTROMETRY [LARGE SCALE ANALYSIS]</scope>
</reference>
<reference key="5">
    <citation type="journal article" date="2016" name="J. Biol. Chem.">
        <title>Saccharomyces cerevisiae forms D-2-hydroxyglutarate and couples its degradation to D-lactate formation via a cytosolic transhydrogenase.</title>
        <authorList>
            <person name="Becker-Kettern J."/>
            <person name="Paczia N."/>
            <person name="Conrotte J.F."/>
            <person name="Kay D.P."/>
            <person name="Guignard C."/>
            <person name="Jung P.P."/>
            <person name="Linster C.L."/>
        </authorList>
    </citation>
    <scope>FUNCTION</scope>
    <scope>CATALYTIC ACTIVITY</scope>
    <scope>BIOPHYSICOCHEMICAL PROPERTIES</scope>
    <source>
        <strain>ATCC 201388 / BY4741</strain>
    </source>
</reference>
<protein>
    <recommendedName>
        <fullName>D-3-phosphoglycerate dehydrogenase 1</fullName>
        <shortName>3-PGDH 1</shortName>
        <ecNumber>1.1.1.95</ecNumber>
    </recommendedName>
    <alternativeName>
        <fullName evidence="7">2-oxoglutarate reductase</fullName>
        <ecNumber evidence="6">1.1.1.399</ecNumber>
    </alternativeName>
</protein>
<dbReference type="EC" id="1.1.1.95"/>
<dbReference type="EC" id="1.1.1.399" evidence="6"/>
<dbReference type="EMBL" id="U18839">
    <property type="protein sequence ID" value="AAB64636.1"/>
    <property type="molecule type" value="Genomic_DNA"/>
</dbReference>
<dbReference type="EMBL" id="BK006939">
    <property type="protein sequence ID" value="DAA07742.1"/>
    <property type="molecule type" value="Genomic_DNA"/>
</dbReference>
<dbReference type="PIR" id="S50584">
    <property type="entry name" value="S50584"/>
</dbReference>
<dbReference type="RefSeq" id="NP_011004.3">
    <property type="nucleotide sequence ID" value="NM_001178972.3"/>
</dbReference>
<dbReference type="SMR" id="P40054"/>
<dbReference type="BioGRID" id="36826">
    <property type="interactions" value="92"/>
</dbReference>
<dbReference type="ComplexPortal" id="CPX-9181">
    <property type="entry name" value="SESAME metabolic enzyme complex"/>
</dbReference>
<dbReference type="DIP" id="DIP-5336N"/>
<dbReference type="FunCoup" id="P40054">
    <property type="interactions" value="745"/>
</dbReference>
<dbReference type="IntAct" id="P40054">
    <property type="interactions" value="9"/>
</dbReference>
<dbReference type="MINT" id="P40054"/>
<dbReference type="STRING" id="4932.YER081W"/>
<dbReference type="MoonDB" id="P40054">
    <property type="type" value="Predicted"/>
</dbReference>
<dbReference type="iPTMnet" id="P40054"/>
<dbReference type="PaxDb" id="4932-YER081W"/>
<dbReference type="PeptideAtlas" id="P40054"/>
<dbReference type="EnsemblFungi" id="YER081W_mRNA">
    <property type="protein sequence ID" value="YER081W"/>
    <property type="gene ID" value="YER081W"/>
</dbReference>
<dbReference type="GeneID" id="856814"/>
<dbReference type="KEGG" id="sce:YER081W"/>
<dbReference type="AGR" id="SGD:S000000883"/>
<dbReference type="SGD" id="S000000883">
    <property type="gene designation" value="SER3"/>
</dbReference>
<dbReference type="VEuPathDB" id="FungiDB:YER081W"/>
<dbReference type="eggNOG" id="KOG0068">
    <property type="taxonomic scope" value="Eukaryota"/>
</dbReference>
<dbReference type="GeneTree" id="ENSGT00940000176610"/>
<dbReference type="HOGENOM" id="CLU_019796_9_2_1"/>
<dbReference type="InParanoid" id="P40054"/>
<dbReference type="OMA" id="SKGCWEV"/>
<dbReference type="OrthoDB" id="1621027at2759"/>
<dbReference type="BioCyc" id="YEAST:YER081W-MONOMER"/>
<dbReference type="UniPathway" id="UPA00135">
    <property type="reaction ID" value="UER00196"/>
</dbReference>
<dbReference type="BioGRID-ORCS" id="856814">
    <property type="hits" value="2 hits in 10 CRISPR screens"/>
</dbReference>
<dbReference type="PRO" id="PR:P40054"/>
<dbReference type="Proteomes" id="UP000002311">
    <property type="component" value="Chromosome V"/>
</dbReference>
<dbReference type="RNAct" id="P40054">
    <property type="molecule type" value="protein"/>
</dbReference>
<dbReference type="GO" id="GO:0005737">
    <property type="term" value="C:cytoplasm"/>
    <property type="evidence" value="ECO:0007005"/>
    <property type="project" value="SGD"/>
</dbReference>
<dbReference type="GO" id="GO:0061759">
    <property type="term" value="F:alpha-ketoglutarate reductase activity"/>
    <property type="evidence" value="ECO:0000314"/>
    <property type="project" value="SGD"/>
</dbReference>
<dbReference type="GO" id="GO:0051287">
    <property type="term" value="F:NAD binding"/>
    <property type="evidence" value="ECO:0007669"/>
    <property type="project" value="InterPro"/>
</dbReference>
<dbReference type="GO" id="GO:0004617">
    <property type="term" value="F:phosphoglycerate dehydrogenase activity"/>
    <property type="evidence" value="ECO:0000315"/>
    <property type="project" value="SGD"/>
</dbReference>
<dbReference type="GO" id="GO:0006564">
    <property type="term" value="P:L-serine biosynthetic process"/>
    <property type="evidence" value="ECO:0000315"/>
    <property type="project" value="SGD"/>
</dbReference>
<dbReference type="CDD" id="cd04901">
    <property type="entry name" value="ACT_3PGDH"/>
    <property type="match status" value="1"/>
</dbReference>
<dbReference type="CDD" id="cd12176">
    <property type="entry name" value="PGDH_3"/>
    <property type="match status" value="1"/>
</dbReference>
<dbReference type="FunFam" id="3.30.70.260:FF:000036">
    <property type="entry name" value="D-3-phosphoglycerate dehydrogenase"/>
    <property type="match status" value="1"/>
</dbReference>
<dbReference type="FunFam" id="3.40.50.720:FF:000041">
    <property type="entry name" value="D-3-phosphoglycerate dehydrogenase"/>
    <property type="match status" value="1"/>
</dbReference>
<dbReference type="Gene3D" id="3.30.70.260">
    <property type="match status" value="1"/>
</dbReference>
<dbReference type="Gene3D" id="3.40.50.720">
    <property type="entry name" value="NAD(P)-binding Rossmann-like Domain"/>
    <property type="match status" value="2"/>
</dbReference>
<dbReference type="InterPro" id="IPR045865">
    <property type="entry name" value="ACT-like_dom_sf"/>
</dbReference>
<dbReference type="InterPro" id="IPR002912">
    <property type="entry name" value="ACT_dom"/>
</dbReference>
<dbReference type="InterPro" id="IPR050857">
    <property type="entry name" value="D-2-hydroxyacid_DH"/>
</dbReference>
<dbReference type="InterPro" id="IPR006139">
    <property type="entry name" value="D-isomer_2_OHA_DH_cat_dom"/>
</dbReference>
<dbReference type="InterPro" id="IPR029753">
    <property type="entry name" value="D-isomer_DH_CS"/>
</dbReference>
<dbReference type="InterPro" id="IPR029752">
    <property type="entry name" value="D-isomer_DH_CS1"/>
</dbReference>
<dbReference type="InterPro" id="IPR006140">
    <property type="entry name" value="D-isomer_DH_NAD-bd"/>
</dbReference>
<dbReference type="InterPro" id="IPR036291">
    <property type="entry name" value="NAD(P)-bd_dom_sf"/>
</dbReference>
<dbReference type="NCBIfam" id="NF008759">
    <property type="entry name" value="PRK11790.1"/>
    <property type="match status" value="1"/>
</dbReference>
<dbReference type="PANTHER" id="PTHR42789">
    <property type="entry name" value="D-ISOMER SPECIFIC 2-HYDROXYACID DEHYDROGENASE FAMILY PROTEIN (AFU_ORTHOLOGUE AFUA_6G10090)"/>
    <property type="match status" value="1"/>
</dbReference>
<dbReference type="PANTHER" id="PTHR42789:SF1">
    <property type="entry name" value="D-ISOMER SPECIFIC 2-HYDROXYACID DEHYDROGENASE FAMILY PROTEIN (AFU_ORTHOLOGUE AFUA_6G10090)"/>
    <property type="match status" value="1"/>
</dbReference>
<dbReference type="Pfam" id="PF00389">
    <property type="entry name" value="2-Hacid_dh"/>
    <property type="match status" value="1"/>
</dbReference>
<dbReference type="Pfam" id="PF02826">
    <property type="entry name" value="2-Hacid_dh_C"/>
    <property type="match status" value="1"/>
</dbReference>
<dbReference type="SUPFAM" id="SSF55021">
    <property type="entry name" value="ACT-like"/>
    <property type="match status" value="1"/>
</dbReference>
<dbReference type="SUPFAM" id="SSF52283">
    <property type="entry name" value="Formate/glycerate dehydrogenase catalytic domain-like"/>
    <property type="match status" value="1"/>
</dbReference>
<dbReference type="SUPFAM" id="SSF51735">
    <property type="entry name" value="NAD(P)-binding Rossmann-fold domains"/>
    <property type="match status" value="1"/>
</dbReference>
<dbReference type="PROSITE" id="PS51671">
    <property type="entry name" value="ACT"/>
    <property type="match status" value="1"/>
</dbReference>
<dbReference type="PROSITE" id="PS00065">
    <property type="entry name" value="D_2_HYDROXYACID_DH_1"/>
    <property type="match status" value="1"/>
</dbReference>
<dbReference type="PROSITE" id="PS00670">
    <property type="entry name" value="D_2_HYDROXYACID_DH_2"/>
    <property type="match status" value="1"/>
</dbReference>
<dbReference type="PROSITE" id="PS00671">
    <property type="entry name" value="D_2_HYDROXYACID_DH_3"/>
    <property type="match status" value="1"/>
</dbReference>
<feature type="chain" id="PRO_0000076018" description="D-3-phosphoglycerate dehydrogenase 1">
    <location>
        <begin position="1"/>
        <end position="469"/>
    </location>
</feature>
<feature type="domain" description="ACT" evidence="4">
    <location>
        <begin position="399"/>
        <end position="469"/>
    </location>
</feature>
<feature type="active site" evidence="1">
    <location>
        <position position="287"/>
    </location>
</feature>
<feature type="active site" evidence="1">
    <location>
        <position position="316"/>
    </location>
</feature>
<feature type="active site" description="Proton donor" evidence="1">
    <location>
        <position position="347"/>
    </location>
</feature>
<feature type="binding site" evidence="2">
    <location>
        <begin position="208"/>
        <end position="209"/>
    </location>
    <ligand>
        <name>NAD(+)</name>
        <dbReference type="ChEBI" id="CHEBI:57540"/>
    </ligand>
</feature>
<feature type="binding site" evidence="2">
    <location>
        <position position="228"/>
    </location>
    <ligand>
        <name>NAD(+)</name>
        <dbReference type="ChEBI" id="CHEBI:57540"/>
    </ligand>
</feature>
<feature type="binding site" evidence="2">
    <location>
        <begin position="285"/>
        <end position="287"/>
    </location>
    <ligand>
        <name>NAD(+)</name>
        <dbReference type="ChEBI" id="CHEBI:57540"/>
    </ligand>
</feature>
<feature type="binding site" evidence="2">
    <location>
        <position position="311"/>
    </location>
    <ligand>
        <name>NAD(+)</name>
        <dbReference type="ChEBI" id="CHEBI:57540"/>
    </ligand>
</feature>
<feature type="binding site" evidence="2">
    <location>
        <begin position="347"/>
        <end position="350"/>
    </location>
    <ligand>
        <name>NAD(+)</name>
        <dbReference type="ChEBI" id="CHEBI:57540"/>
    </ligand>
</feature>
<feature type="modified residue" description="Phosphoserine" evidence="8">
    <location>
        <position position="22"/>
    </location>
</feature>
<feature type="modified residue" description="Phosphoserine" evidence="3">
    <location>
        <position position="29"/>
    </location>
</feature>
<feature type="modified residue" description="Phosphoserine" evidence="3">
    <location>
        <position position="33"/>
    </location>
</feature>
<evidence type="ECO:0000250" key="1"/>
<evidence type="ECO:0000250" key="2">
    <source>
        <dbReference type="UniProtKB" id="P0A9T0"/>
    </source>
</evidence>
<evidence type="ECO:0000250" key="3">
    <source>
        <dbReference type="UniProtKB" id="P40510"/>
    </source>
</evidence>
<evidence type="ECO:0000255" key="4">
    <source>
        <dbReference type="PROSITE-ProRule" id="PRU01007"/>
    </source>
</evidence>
<evidence type="ECO:0000269" key="5">
    <source>
    </source>
</evidence>
<evidence type="ECO:0000269" key="6">
    <source>
    </source>
</evidence>
<evidence type="ECO:0000305" key="7"/>
<evidence type="ECO:0007744" key="8">
    <source>
    </source>
</evidence>
<gene>
    <name type="primary">SER3</name>
    <name type="ordered locus">YER081W</name>
</gene>
<comment type="function">
    <text evidence="6">Catalyzes the reversible oxidation of 3-phospho-D-glycerate to 3-phosphonooxypyruvate, the first step of the phosphorylated L-serine biosynthesis pathway. Also catalyzes the reversible oxidation of 2-hydroxyglutarate to 2-oxoglutarate.</text>
</comment>
<comment type="catalytic activity">
    <reaction>
        <text>(2R)-3-phosphoglycerate + NAD(+) = 3-phosphooxypyruvate + NADH + H(+)</text>
        <dbReference type="Rhea" id="RHEA:12641"/>
        <dbReference type="ChEBI" id="CHEBI:15378"/>
        <dbReference type="ChEBI" id="CHEBI:18110"/>
        <dbReference type="ChEBI" id="CHEBI:57540"/>
        <dbReference type="ChEBI" id="CHEBI:57945"/>
        <dbReference type="ChEBI" id="CHEBI:58272"/>
        <dbReference type="EC" id="1.1.1.95"/>
    </reaction>
</comment>
<comment type="catalytic activity">
    <reaction evidence="6">
        <text>(R)-2-hydroxyglutarate + NAD(+) = 2-oxoglutarate + NADH + H(+)</text>
        <dbReference type="Rhea" id="RHEA:49612"/>
        <dbReference type="ChEBI" id="CHEBI:15378"/>
        <dbReference type="ChEBI" id="CHEBI:15801"/>
        <dbReference type="ChEBI" id="CHEBI:16810"/>
        <dbReference type="ChEBI" id="CHEBI:57540"/>
        <dbReference type="ChEBI" id="CHEBI:57945"/>
        <dbReference type="EC" id="1.1.1.399"/>
    </reaction>
</comment>
<comment type="biophysicochemical properties">
    <kinetics>
        <KM evidence="6">49 uM for 2-oxoglutarate</KM>
        <text evidence="6">kcat is 0.2 sec(-1) for 2-oxoglutarate reduction.</text>
    </kinetics>
</comment>
<comment type="pathway">
    <text>Amino-acid biosynthesis; L-serine biosynthesis; L-serine from 3-phospho-D-glycerate: step 1/3.</text>
</comment>
<comment type="interaction">
    <interactant intactId="EBI-16961">
        <id>P40054</id>
    </interactant>
    <interactant intactId="EBI-16821">
        <id>P40510</id>
        <label>SER33</label>
    </interactant>
    <organismsDiffer>false</organismsDiffer>
    <experiments>6</experiments>
</comment>
<comment type="miscellaneous">
    <text evidence="5">Present with 7670 molecules/cell in log phase SD medium.</text>
</comment>
<comment type="similarity">
    <text evidence="7">Belongs to the D-isomer specific 2-hydroxyacid dehydrogenase family.</text>
</comment>